<feature type="chain" id="PRO_0000168836" description="Uncharacterized protein YcfL">
    <location>
        <begin position="1"/>
        <end position="125"/>
    </location>
</feature>
<dbReference type="EMBL" id="U00096">
    <property type="protein sequence ID" value="AAC74188.1"/>
    <property type="molecule type" value="Genomic_DNA"/>
</dbReference>
<dbReference type="EMBL" id="AP009048">
    <property type="protein sequence ID" value="BAA35911.1"/>
    <property type="molecule type" value="Genomic_DNA"/>
</dbReference>
<dbReference type="PIR" id="E64854">
    <property type="entry name" value="E64854"/>
</dbReference>
<dbReference type="RefSeq" id="NP_415622.1">
    <property type="nucleotide sequence ID" value="NC_000913.3"/>
</dbReference>
<dbReference type="RefSeq" id="WP_001225295.1">
    <property type="nucleotide sequence ID" value="NZ_SSZK01000019.1"/>
</dbReference>
<dbReference type="SMR" id="P75946"/>
<dbReference type="BioGRID" id="4260941">
    <property type="interactions" value="282"/>
</dbReference>
<dbReference type="BioGRID" id="852833">
    <property type="interactions" value="1"/>
</dbReference>
<dbReference type="DIP" id="DIP-11540N"/>
<dbReference type="FunCoup" id="P75946">
    <property type="interactions" value="101"/>
</dbReference>
<dbReference type="IntAct" id="P75946">
    <property type="interactions" value="2"/>
</dbReference>
<dbReference type="STRING" id="511145.b1104"/>
<dbReference type="jPOST" id="P75946"/>
<dbReference type="PaxDb" id="511145-b1104"/>
<dbReference type="EnsemblBacteria" id="AAC74188">
    <property type="protein sequence ID" value="AAC74188"/>
    <property type="gene ID" value="b1104"/>
</dbReference>
<dbReference type="GeneID" id="948539"/>
<dbReference type="KEGG" id="ecj:JW1090"/>
<dbReference type="KEGG" id="eco:b1104"/>
<dbReference type="KEGG" id="ecoc:C3026_06665"/>
<dbReference type="PATRIC" id="fig|511145.12.peg.1148"/>
<dbReference type="EchoBASE" id="EB3204"/>
<dbReference type="eggNOG" id="COG5633">
    <property type="taxonomic scope" value="Bacteria"/>
</dbReference>
<dbReference type="HOGENOM" id="CLU_145387_2_0_6"/>
<dbReference type="InParanoid" id="P75946"/>
<dbReference type="OMA" id="VTLHYRF"/>
<dbReference type="OrthoDB" id="5616034at2"/>
<dbReference type="PhylomeDB" id="P75946"/>
<dbReference type="BioCyc" id="EcoCyc:G6564-MONOMER"/>
<dbReference type="PRO" id="PR:P75946"/>
<dbReference type="Proteomes" id="UP000000625">
    <property type="component" value="Chromosome"/>
</dbReference>
<dbReference type="GO" id="GO:0006974">
    <property type="term" value="P:DNA damage response"/>
    <property type="evidence" value="ECO:0000270"/>
    <property type="project" value="EcoliWiki"/>
</dbReference>
<dbReference type="CDD" id="cd09030">
    <property type="entry name" value="DUF1425"/>
    <property type="match status" value="1"/>
</dbReference>
<dbReference type="Gene3D" id="2.60.40.3230">
    <property type="match status" value="1"/>
</dbReference>
<dbReference type="InterPro" id="IPR010824">
    <property type="entry name" value="DUF1425"/>
</dbReference>
<dbReference type="InterPro" id="IPR038483">
    <property type="entry name" value="YcfL-like_sf"/>
</dbReference>
<dbReference type="Pfam" id="PF07233">
    <property type="entry name" value="DUF1425"/>
    <property type="match status" value="1"/>
</dbReference>
<dbReference type="PROSITE" id="PS51257">
    <property type="entry name" value="PROKAR_LIPOPROTEIN"/>
    <property type="match status" value="1"/>
</dbReference>
<keyword id="KW-1185">Reference proteome</keyword>
<accession>P75946</accession>
<organism>
    <name type="scientific">Escherichia coli (strain K12)</name>
    <dbReference type="NCBI Taxonomy" id="83333"/>
    <lineage>
        <taxon>Bacteria</taxon>
        <taxon>Pseudomonadati</taxon>
        <taxon>Pseudomonadota</taxon>
        <taxon>Gammaproteobacteria</taxon>
        <taxon>Enterobacterales</taxon>
        <taxon>Enterobacteriaceae</taxon>
        <taxon>Escherichia</taxon>
    </lineage>
</organism>
<gene>
    <name type="primary">ycfL</name>
    <name type="ordered locus">b1104</name>
    <name type="ordered locus">JW1090</name>
</gene>
<name>YCFL_ECOLI</name>
<proteinExistence type="predicted"/>
<reference key="1">
    <citation type="journal article" date="1996" name="DNA Res.">
        <title>A 718-kb DNA sequence of the Escherichia coli K-12 genome corresponding to the 12.7-28.0 min region on the linkage map.</title>
        <authorList>
            <person name="Oshima T."/>
            <person name="Aiba H."/>
            <person name="Baba T."/>
            <person name="Fujita K."/>
            <person name="Hayashi K."/>
            <person name="Honjo A."/>
            <person name="Ikemoto K."/>
            <person name="Inada T."/>
            <person name="Itoh T."/>
            <person name="Kajihara M."/>
            <person name="Kanai K."/>
            <person name="Kashimoto K."/>
            <person name="Kimura S."/>
            <person name="Kitagawa M."/>
            <person name="Makino K."/>
            <person name="Masuda S."/>
            <person name="Miki T."/>
            <person name="Mizobuchi K."/>
            <person name="Mori H."/>
            <person name="Motomura K."/>
            <person name="Nakamura Y."/>
            <person name="Nashimoto H."/>
            <person name="Nishio Y."/>
            <person name="Saito N."/>
            <person name="Sampei G."/>
            <person name="Seki Y."/>
            <person name="Tagami H."/>
            <person name="Takemoto K."/>
            <person name="Wada C."/>
            <person name="Yamamoto Y."/>
            <person name="Yano M."/>
            <person name="Horiuchi T."/>
        </authorList>
    </citation>
    <scope>NUCLEOTIDE SEQUENCE [LARGE SCALE GENOMIC DNA]</scope>
    <source>
        <strain>K12 / W3110 / ATCC 27325 / DSM 5911</strain>
    </source>
</reference>
<reference key="2">
    <citation type="journal article" date="1997" name="Science">
        <title>The complete genome sequence of Escherichia coli K-12.</title>
        <authorList>
            <person name="Blattner F.R."/>
            <person name="Plunkett G. III"/>
            <person name="Bloch C.A."/>
            <person name="Perna N.T."/>
            <person name="Burland V."/>
            <person name="Riley M."/>
            <person name="Collado-Vides J."/>
            <person name="Glasner J.D."/>
            <person name="Rode C.K."/>
            <person name="Mayhew G.F."/>
            <person name="Gregor J."/>
            <person name="Davis N.W."/>
            <person name="Kirkpatrick H.A."/>
            <person name="Goeden M.A."/>
            <person name="Rose D.J."/>
            <person name="Mau B."/>
            <person name="Shao Y."/>
        </authorList>
    </citation>
    <scope>NUCLEOTIDE SEQUENCE [LARGE SCALE GENOMIC DNA]</scope>
    <source>
        <strain>K12 / MG1655 / ATCC 47076</strain>
    </source>
</reference>
<reference key="3">
    <citation type="journal article" date="2006" name="Mol. Syst. Biol.">
        <title>Highly accurate genome sequences of Escherichia coli K-12 strains MG1655 and W3110.</title>
        <authorList>
            <person name="Hayashi K."/>
            <person name="Morooka N."/>
            <person name="Yamamoto Y."/>
            <person name="Fujita K."/>
            <person name="Isono K."/>
            <person name="Choi S."/>
            <person name="Ohtsubo E."/>
            <person name="Baba T."/>
            <person name="Wanner B.L."/>
            <person name="Mori H."/>
            <person name="Horiuchi T."/>
        </authorList>
    </citation>
    <scope>NUCLEOTIDE SEQUENCE [LARGE SCALE GENOMIC DNA]</scope>
    <source>
        <strain>K12 / W3110 / ATCC 27325 / DSM 5911</strain>
    </source>
</reference>
<sequence>MRKGCFGLVSLVLLLLVGCRSHPEIPVNDEQSLVMESSLLAAGISAEKPFLSTSDIQPSASSTLYNERQEPVTVHYRFYWYDARGLEMHPLERPRSVTIPAHSAVTLYGSANFLGAHKVRLYLYL</sequence>
<protein>
    <recommendedName>
        <fullName>Uncharacterized protein YcfL</fullName>
    </recommendedName>
</protein>